<feature type="chain" id="PRO_1000119009" description="Cytidylate kinase">
    <location>
        <begin position="1"/>
        <end position="225"/>
    </location>
</feature>
<feature type="binding site" evidence="1">
    <location>
        <begin position="11"/>
        <end position="19"/>
    </location>
    <ligand>
        <name>ATP</name>
        <dbReference type="ChEBI" id="CHEBI:30616"/>
    </ligand>
</feature>
<gene>
    <name evidence="1" type="primary">cmk</name>
    <name type="ordered locus">BCB4264_A1552</name>
</gene>
<dbReference type="EC" id="2.7.4.25" evidence="1"/>
<dbReference type="EMBL" id="CP001176">
    <property type="protein sequence ID" value="ACK61575.1"/>
    <property type="molecule type" value="Genomic_DNA"/>
</dbReference>
<dbReference type="RefSeq" id="WP_000361252.1">
    <property type="nucleotide sequence ID" value="NZ_VEHB01000003.1"/>
</dbReference>
<dbReference type="SMR" id="B7HHQ0"/>
<dbReference type="GeneID" id="72448260"/>
<dbReference type="KEGG" id="bcb:BCB4264_A1552"/>
<dbReference type="HOGENOM" id="CLU_079959_0_2_9"/>
<dbReference type="Proteomes" id="UP000007096">
    <property type="component" value="Chromosome"/>
</dbReference>
<dbReference type="GO" id="GO:0005829">
    <property type="term" value="C:cytosol"/>
    <property type="evidence" value="ECO:0007669"/>
    <property type="project" value="TreeGrafter"/>
</dbReference>
<dbReference type="GO" id="GO:0005524">
    <property type="term" value="F:ATP binding"/>
    <property type="evidence" value="ECO:0007669"/>
    <property type="project" value="UniProtKB-UniRule"/>
</dbReference>
<dbReference type="GO" id="GO:0036430">
    <property type="term" value="F:CMP kinase activity"/>
    <property type="evidence" value="ECO:0007669"/>
    <property type="project" value="RHEA"/>
</dbReference>
<dbReference type="GO" id="GO:0036431">
    <property type="term" value="F:dCMP kinase activity"/>
    <property type="evidence" value="ECO:0007669"/>
    <property type="project" value="RHEA"/>
</dbReference>
<dbReference type="GO" id="GO:0015949">
    <property type="term" value="P:nucleobase-containing small molecule interconversion"/>
    <property type="evidence" value="ECO:0007669"/>
    <property type="project" value="TreeGrafter"/>
</dbReference>
<dbReference type="GO" id="GO:0006220">
    <property type="term" value="P:pyrimidine nucleotide metabolic process"/>
    <property type="evidence" value="ECO:0007669"/>
    <property type="project" value="UniProtKB-UniRule"/>
</dbReference>
<dbReference type="CDD" id="cd02020">
    <property type="entry name" value="CMPK"/>
    <property type="match status" value="1"/>
</dbReference>
<dbReference type="FunFam" id="3.40.50.300:FF:000484">
    <property type="entry name" value="Cytidylate kinase"/>
    <property type="match status" value="1"/>
</dbReference>
<dbReference type="Gene3D" id="3.40.50.300">
    <property type="entry name" value="P-loop containing nucleotide triphosphate hydrolases"/>
    <property type="match status" value="1"/>
</dbReference>
<dbReference type="HAMAP" id="MF_00238">
    <property type="entry name" value="Cytidyl_kinase_type1"/>
    <property type="match status" value="1"/>
</dbReference>
<dbReference type="InterPro" id="IPR003136">
    <property type="entry name" value="Cytidylate_kin"/>
</dbReference>
<dbReference type="InterPro" id="IPR011994">
    <property type="entry name" value="Cytidylate_kinase_dom"/>
</dbReference>
<dbReference type="InterPro" id="IPR027417">
    <property type="entry name" value="P-loop_NTPase"/>
</dbReference>
<dbReference type="NCBIfam" id="TIGR00017">
    <property type="entry name" value="cmk"/>
    <property type="match status" value="1"/>
</dbReference>
<dbReference type="PANTHER" id="PTHR21299:SF2">
    <property type="entry name" value="CYTIDYLATE KINASE"/>
    <property type="match status" value="1"/>
</dbReference>
<dbReference type="PANTHER" id="PTHR21299">
    <property type="entry name" value="CYTIDYLATE KINASE/PANTOATE-BETA-ALANINE LIGASE"/>
    <property type="match status" value="1"/>
</dbReference>
<dbReference type="Pfam" id="PF02224">
    <property type="entry name" value="Cytidylate_kin"/>
    <property type="match status" value="1"/>
</dbReference>
<dbReference type="SUPFAM" id="SSF52540">
    <property type="entry name" value="P-loop containing nucleoside triphosphate hydrolases"/>
    <property type="match status" value="1"/>
</dbReference>
<organism>
    <name type="scientific">Bacillus cereus (strain B4264)</name>
    <dbReference type="NCBI Taxonomy" id="405532"/>
    <lineage>
        <taxon>Bacteria</taxon>
        <taxon>Bacillati</taxon>
        <taxon>Bacillota</taxon>
        <taxon>Bacilli</taxon>
        <taxon>Bacillales</taxon>
        <taxon>Bacillaceae</taxon>
        <taxon>Bacillus</taxon>
        <taxon>Bacillus cereus group</taxon>
    </lineage>
</organism>
<protein>
    <recommendedName>
        <fullName evidence="1">Cytidylate kinase</fullName>
        <shortName evidence="1">CK</shortName>
        <ecNumber evidence="1">2.7.4.25</ecNumber>
    </recommendedName>
    <alternativeName>
        <fullName evidence="1">Cytidine monophosphate kinase</fullName>
        <shortName evidence="1">CMP kinase</shortName>
    </alternativeName>
</protein>
<reference key="1">
    <citation type="submission" date="2008-10" db="EMBL/GenBank/DDBJ databases">
        <title>Genome sequence of Bacillus cereus B4264.</title>
        <authorList>
            <person name="Dodson R.J."/>
            <person name="Durkin A.S."/>
            <person name="Rosovitz M.J."/>
            <person name="Rasko D.A."/>
            <person name="Hoffmaster A."/>
            <person name="Ravel J."/>
            <person name="Sutton G."/>
        </authorList>
    </citation>
    <scope>NUCLEOTIDE SEQUENCE [LARGE SCALE GENOMIC DNA]</scope>
    <source>
        <strain>B4264</strain>
    </source>
</reference>
<keyword id="KW-0067">ATP-binding</keyword>
<keyword id="KW-0963">Cytoplasm</keyword>
<keyword id="KW-0418">Kinase</keyword>
<keyword id="KW-0547">Nucleotide-binding</keyword>
<keyword id="KW-0808">Transferase</keyword>
<sequence length="225" mass="25243">MDKRISIAIDGPAAAGKSTVAKVVAKELSYVYIDTGAMYRTLTYAALEQKVDIENEEQLMEVVKNVNIEFQQGENTQLVFLNGQDVSEVIRTPDVTNRVSIVAKHRLVREEMVRRQQELAKKGGVVMDGRDIGTHVLPDAEVKIFMLASVEERAERRHLENLNKGFDSNLEQLKEEIAQRDKLDSEREVSPLKKADDALELDTTSLSIEEVVQKIMSIVSGVFAK</sequence>
<comment type="catalytic activity">
    <reaction evidence="1">
        <text>CMP + ATP = CDP + ADP</text>
        <dbReference type="Rhea" id="RHEA:11600"/>
        <dbReference type="ChEBI" id="CHEBI:30616"/>
        <dbReference type="ChEBI" id="CHEBI:58069"/>
        <dbReference type="ChEBI" id="CHEBI:60377"/>
        <dbReference type="ChEBI" id="CHEBI:456216"/>
        <dbReference type="EC" id="2.7.4.25"/>
    </reaction>
</comment>
<comment type="catalytic activity">
    <reaction evidence="1">
        <text>dCMP + ATP = dCDP + ADP</text>
        <dbReference type="Rhea" id="RHEA:25094"/>
        <dbReference type="ChEBI" id="CHEBI:30616"/>
        <dbReference type="ChEBI" id="CHEBI:57566"/>
        <dbReference type="ChEBI" id="CHEBI:58593"/>
        <dbReference type="ChEBI" id="CHEBI:456216"/>
        <dbReference type="EC" id="2.7.4.25"/>
    </reaction>
</comment>
<comment type="subcellular location">
    <subcellularLocation>
        <location evidence="1">Cytoplasm</location>
    </subcellularLocation>
</comment>
<comment type="similarity">
    <text evidence="1">Belongs to the cytidylate kinase family. Type 1 subfamily.</text>
</comment>
<proteinExistence type="inferred from homology"/>
<accession>B7HHQ0</accession>
<evidence type="ECO:0000255" key="1">
    <source>
        <dbReference type="HAMAP-Rule" id="MF_00238"/>
    </source>
</evidence>
<name>KCY_BACC4</name>